<dbReference type="EMBL" id="CU329672">
    <property type="protein sequence ID" value="CAA19273.1"/>
    <property type="molecule type" value="Genomic_DNA"/>
</dbReference>
<dbReference type="PIR" id="T41566">
    <property type="entry name" value="T41566"/>
</dbReference>
<dbReference type="SMR" id="O74955"/>
<dbReference type="BioGRID" id="276018">
    <property type="interactions" value="7"/>
</dbReference>
<dbReference type="FunCoup" id="O74955">
    <property type="interactions" value="545"/>
</dbReference>
<dbReference type="STRING" id="284812.O74955"/>
<dbReference type="iPTMnet" id="O74955"/>
<dbReference type="PaxDb" id="4896-SPCC736.09c.1"/>
<dbReference type="EnsemblFungi" id="SPCC736.09c.1">
    <property type="protein sequence ID" value="SPCC736.09c.1:pep"/>
    <property type="gene ID" value="SPCC736.09c"/>
</dbReference>
<dbReference type="KEGG" id="spo:2539455"/>
<dbReference type="PomBase" id="SPCC736.09c"/>
<dbReference type="VEuPathDB" id="FungiDB:SPCC736.09c"/>
<dbReference type="eggNOG" id="KOG3066">
    <property type="taxonomic scope" value="Eukaryota"/>
</dbReference>
<dbReference type="HOGENOM" id="CLU_067225_2_1_1"/>
<dbReference type="InParanoid" id="O74955"/>
<dbReference type="OMA" id="DTCMETC"/>
<dbReference type="PhylomeDB" id="O74955"/>
<dbReference type="Reactome" id="R-SPO-426486">
    <property type="pathway name" value="Small interfering RNA (siRNA) biogenesis"/>
</dbReference>
<dbReference type="PRO" id="PR:O74955"/>
<dbReference type="Proteomes" id="UP000002485">
    <property type="component" value="Chromosome III"/>
</dbReference>
<dbReference type="GO" id="GO:0005737">
    <property type="term" value="C:cytoplasm"/>
    <property type="evidence" value="ECO:0000318"/>
    <property type="project" value="GO_Central"/>
</dbReference>
<dbReference type="GO" id="GO:0005829">
    <property type="term" value="C:cytosol"/>
    <property type="evidence" value="ECO:0007005"/>
    <property type="project" value="PomBase"/>
</dbReference>
<dbReference type="GO" id="GO:0005634">
    <property type="term" value="C:nucleus"/>
    <property type="evidence" value="ECO:0007005"/>
    <property type="project" value="PomBase"/>
</dbReference>
<dbReference type="GO" id="GO:0003723">
    <property type="term" value="F:RNA binding"/>
    <property type="evidence" value="ECO:0000318"/>
    <property type="project" value="GO_Central"/>
</dbReference>
<dbReference type="GO" id="GO:0004521">
    <property type="term" value="F:RNA endonuclease activity"/>
    <property type="evidence" value="ECO:0000318"/>
    <property type="project" value="GO_Central"/>
</dbReference>
<dbReference type="GO" id="GO:0043565">
    <property type="term" value="F:sequence-specific DNA binding"/>
    <property type="evidence" value="ECO:0007669"/>
    <property type="project" value="InterPro"/>
</dbReference>
<dbReference type="GO" id="GO:0006396">
    <property type="term" value="P:RNA processing"/>
    <property type="evidence" value="ECO:0000304"/>
    <property type="project" value="PomBase"/>
</dbReference>
<dbReference type="CDD" id="cd14820">
    <property type="entry name" value="TRAX"/>
    <property type="match status" value="1"/>
</dbReference>
<dbReference type="Gene3D" id="1.20.58.190">
    <property type="entry name" value="Translin, domain 1"/>
    <property type="match status" value="1"/>
</dbReference>
<dbReference type="Gene3D" id="1.20.58.200">
    <property type="entry name" value="Translin, domain 2"/>
    <property type="match status" value="1"/>
</dbReference>
<dbReference type="InterPro" id="IPR016069">
    <property type="entry name" value="Translin_C"/>
</dbReference>
<dbReference type="InterPro" id="IPR002848">
    <property type="entry name" value="Translin_fam"/>
</dbReference>
<dbReference type="InterPro" id="IPR016068">
    <property type="entry name" value="Translin_N"/>
</dbReference>
<dbReference type="InterPro" id="IPR036081">
    <property type="entry name" value="Translin_sf"/>
</dbReference>
<dbReference type="PANTHER" id="PTHR10741">
    <property type="entry name" value="TRANSLIN AND TRANSLIN ASSOCIATED PROTEIN X"/>
    <property type="match status" value="1"/>
</dbReference>
<dbReference type="Pfam" id="PF01997">
    <property type="entry name" value="Translin"/>
    <property type="match status" value="1"/>
</dbReference>
<dbReference type="SUPFAM" id="SSF74784">
    <property type="entry name" value="Translin"/>
    <property type="match status" value="1"/>
</dbReference>
<accession>O74955</accession>
<comment type="subcellular location">
    <subcellularLocation>
        <location evidence="4">Cytoplasm</location>
    </subcellularLocation>
    <subcellularLocation>
        <location evidence="4">Nucleus</location>
    </subcellularLocation>
</comment>
<comment type="disruption phenotype">
    <text evidence="3">Deletion of both tsn1 and trax results in slightly stimulated cell proliferation.</text>
</comment>
<comment type="similarity">
    <text evidence="2">Belongs to the translin family.</text>
</comment>
<feature type="chain" id="PRO_0000352756" description="Translin-associated protein X homolog">
    <location>
        <begin position="1"/>
        <end position="231"/>
    </location>
</feature>
<sequence length="231" mass="26775">MEEEFLSFKNFLQEDQDKREKIIRLSREITIQSKRMIFLLHQTSSSDGFPLPKDFDRTSIFEKKIHKELESLKRELAGLNADKFSSACTHGLQEYVEAVTFKFWLQTGTLLSCKDSSFRISINFIDYVLGVCDMTGEIMRFLVTNGSKFSVQQLTQQVKFLRGLHKNCSEIEHLPSKVKSELQQKLSVMENSISKVEGICYSKILREADKRYLNLEVDTATPPEEKRLRST</sequence>
<proteinExistence type="inferred from homology"/>
<organism>
    <name type="scientific">Schizosaccharomyces pombe (strain 972 / ATCC 24843)</name>
    <name type="common">Fission yeast</name>
    <dbReference type="NCBI Taxonomy" id="284812"/>
    <lineage>
        <taxon>Eukaryota</taxon>
        <taxon>Fungi</taxon>
        <taxon>Dikarya</taxon>
        <taxon>Ascomycota</taxon>
        <taxon>Taphrinomycotina</taxon>
        <taxon>Schizosaccharomycetes</taxon>
        <taxon>Schizosaccharomycetales</taxon>
        <taxon>Schizosaccharomycetaceae</taxon>
        <taxon>Schizosaccharomyces</taxon>
    </lineage>
</organism>
<gene>
    <name type="ORF">SPCC736.09c</name>
</gene>
<keyword id="KW-0963">Cytoplasm</keyword>
<keyword id="KW-0539">Nucleus</keyword>
<keyword id="KW-1185">Reference proteome</keyword>
<protein>
    <recommendedName>
        <fullName evidence="1 5">Translin-associated protein X homolog</fullName>
    </recommendedName>
</protein>
<name>TSNAX_SCHPO</name>
<reference evidence="7" key="1">
    <citation type="journal article" date="2002" name="Nature">
        <title>The genome sequence of Schizosaccharomyces pombe.</title>
        <authorList>
            <person name="Wood V."/>
            <person name="Gwilliam R."/>
            <person name="Rajandream M.A."/>
            <person name="Lyne M.H."/>
            <person name="Lyne R."/>
            <person name="Stewart A."/>
            <person name="Sgouros J.G."/>
            <person name="Peat N."/>
            <person name="Hayles J."/>
            <person name="Baker S.G."/>
            <person name="Basham D."/>
            <person name="Bowman S."/>
            <person name="Brooks K."/>
            <person name="Brown D."/>
            <person name="Brown S."/>
            <person name="Chillingworth T."/>
            <person name="Churcher C.M."/>
            <person name="Collins M."/>
            <person name="Connor R."/>
            <person name="Cronin A."/>
            <person name="Davis P."/>
            <person name="Feltwell T."/>
            <person name="Fraser A."/>
            <person name="Gentles S."/>
            <person name="Goble A."/>
            <person name="Hamlin N."/>
            <person name="Harris D.E."/>
            <person name="Hidalgo J."/>
            <person name="Hodgson G."/>
            <person name="Holroyd S."/>
            <person name="Hornsby T."/>
            <person name="Howarth S."/>
            <person name="Huckle E.J."/>
            <person name="Hunt S."/>
            <person name="Jagels K."/>
            <person name="James K.D."/>
            <person name="Jones L."/>
            <person name="Jones M."/>
            <person name="Leather S."/>
            <person name="McDonald S."/>
            <person name="McLean J."/>
            <person name="Mooney P."/>
            <person name="Moule S."/>
            <person name="Mungall K.L."/>
            <person name="Murphy L.D."/>
            <person name="Niblett D."/>
            <person name="Odell C."/>
            <person name="Oliver K."/>
            <person name="O'Neil S."/>
            <person name="Pearson D."/>
            <person name="Quail M.A."/>
            <person name="Rabbinowitsch E."/>
            <person name="Rutherford K.M."/>
            <person name="Rutter S."/>
            <person name="Saunders D."/>
            <person name="Seeger K."/>
            <person name="Sharp S."/>
            <person name="Skelton J."/>
            <person name="Simmonds M.N."/>
            <person name="Squares R."/>
            <person name="Squares S."/>
            <person name="Stevens K."/>
            <person name="Taylor K."/>
            <person name="Taylor R.G."/>
            <person name="Tivey A."/>
            <person name="Walsh S.V."/>
            <person name="Warren T."/>
            <person name="Whitehead S."/>
            <person name="Woodward J.R."/>
            <person name="Volckaert G."/>
            <person name="Aert R."/>
            <person name="Robben J."/>
            <person name="Grymonprez B."/>
            <person name="Weltjens I."/>
            <person name="Vanstreels E."/>
            <person name="Rieger M."/>
            <person name="Schaefer M."/>
            <person name="Mueller-Auer S."/>
            <person name="Gabel C."/>
            <person name="Fuchs M."/>
            <person name="Duesterhoeft A."/>
            <person name="Fritzc C."/>
            <person name="Holzer E."/>
            <person name="Moestl D."/>
            <person name="Hilbert H."/>
            <person name="Borzym K."/>
            <person name="Langer I."/>
            <person name="Beck A."/>
            <person name="Lehrach H."/>
            <person name="Reinhardt R."/>
            <person name="Pohl T.M."/>
            <person name="Eger P."/>
            <person name="Zimmermann W."/>
            <person name="Wedler H."/>
            <person name="Wambutt R."/>
            <person name="Purnelle B."/>
            <person name="Goffeau A."/>
            <person name="Cadieu E."/>
            <person name="Dreano S."/>
            <person name="Gloux S."/>
            <person name="Lelaure V."/>
            <person name="Mottier S."/>
            <person name="Galibert F."/>
            <person name="Aves S.J."/>
            <person name="Xiang Z."/>
            <person name="Hunt C."/>
            <person name="Moore K."/>
            <person name="Hurst S.M."/>
            <person name="Lucas M."/>
            <person name="Rochet M."/>
            <person name="Gaillardin C."/>
            <person name="Tallada V.A."/>
            <person name="Garzon A."/>
            <person name="Thode G."/>
            <person name="Daga R.R."/>
            <person name="Cruzado L."/>
            <person name="Jimenez J."/>
            <person name="Sanchez M."/>
            <person name="del Rey F."/>
            <person name="Benito J."/>
            <person name="Dominguez A."/>
            <person name="Revuelta J.L."/>
            <person name="Moreno S."/>
            <person name="Armstrong J."/>
            <person name="Forsburg S.L."/>
            <person name="Cerutti L."/>
            <person name="Lowe T."/>
            <person name="McCombie W.R."/>
            <person name="Paulsen I."/>
            <person name="Potashkin J."/>
            <person name="Shpakovski G.V."/>
            <person name="Ussery D."/>
            <person name="Barrell B.G."/>
            <person name="Nurse P."/>
        </authorList>
    </citation>
    <scope>NUCLEOTIDE SEQUENCE [LARGE SCALE GENOMIC DNA]</scope>
    <source>
        <strain>972 / ATCC 24843</strain>
    </source>
</reference>
<reference evidence="6" key="2">
    <citation type="journal article" date="2005" name="Nucleic Acids Res.">
        <title>Cloning and characterization of the Schizosaccharomyces pombe homologs of the human protein translin and the translin-associated protein TRAX.</title>
        <authorList>
            <person name="Laufman O."/>
            <person name="Ben Yosef R."/>
            <person name="Adir N."/>
            <person name="Manor H."/>
        </authorList>
    </citation>
    <scope>DISRUPTION PHENOTYPE</scope>
</reference>
<reference evidence="6" key="3">
    <citation type="journal article" date="2006" name="Nat. Biotechnol.">
        <title>ORFeome cloning and global analysis of protein localization in the fission yeast Schizosaccharomyces pombe.</title>
        <authorList>
            <person name="Matsuyama A."/>
            <person name="Arai R."/>
            <person name="Yashiroda Y."/>
            <person name="Shirai A."/>
            <person name="Kamata A."/>
            <person name="Sekido S."/>
            <person name="Kobayashi Y."/>
            <person name="Hashimoto A."/>
            <person name="Hamamoto M."/>
            <person name="Hiraoka Y."/>
            <person name="Horinouchi S."/>
            <person name="Yoshida M."/>
        </authorList>
    </citation>
    <scope>SUBCELLULAR LOCATION [LARGE SCALE ANALYSIS]</scope>
</reference>
<evidence type="ECO:0000250" key="1">
    <source>
        <dbReference type="UniProtKB" id="Q9JHB5"/>
    </source>
</evidence>
<evidence type="ECO:0000255" key="2"/>
<evidence type="ECO:0000269" key="3">
    <source>
    </source>
</evidence>
<evidence type="ECO:0000269" key="4">
    <source>
    </source>
</evidence>
<evidence type="ECO:0000303" key="5">
    <source>
    </source>
</evidence>
<evidence type="ECO:0000305" key="6"/>
<evidence type="ECO:0000312" key="7">
    <source>
        <dbReference type="EMBL" id="CAA19273.1"/>
    </source>
</evidence>